<proteinExistence type="evidence at protein level"/>
<gene>
    <name type="primary">Stat3</name>
</gene>
<organism>
    <name type="scientific">Rattus norvegicus</name>
    <name type="common">Rat</name>
    <dbReference type="NCBI Taxonomy" id="10116"/>
    <lineage>
        <taxon>Eukaryota</taxon>
        <taxon>Metazoa</taxon>
        <taxon>Chordata</taxon>
        <taxon>Craniata</taxon>
        <taxon>Vertebrata</taxon>
        <taxon>Euteleostomi</taxon>
        <taxon>Mammalia</taxon>
        <taxon>Eutheria</taxon>
        <taxon>Euarchontoglires</taxon>
        <taxon>Glires</taxon>
        <taxon>Rodentia</taxon>
        <taxon>Myomorpha</taxon>
        <taxon>Muroidea</taxon>
        <taxon>Muridae</taxon>
        <taxon>Murinae</taxon>
        <taxon>Rattus</taxon>
    </lineage>
</organism>
<keyword id="KW-0007">Acetylation</keyword>
<keyword id="KW-0010">Activator</keyword>
<keyword id="KW-0963">Cytoplasm</keyword>
<keyword id="KW-0238">DNA-binding</keyword>
<keyword id="KW-0539">Nucleus</keyword>
<keyword id="KW-0597">Phosphoprotein</keyword>
<keyword id="KW-1185">Reference proteome</keyword>
<keyword id="KW-0727">SH2 domain</keyword>
<keyword id="KW-0804">Transcription</keyword>
<keyword id="KW-0805">Transcription regulation</keyword>
<dbReference type="EMBL" id="X91810">
    <property type="protein sequence ID" value="CAA62920.1"/>
    <property type="molecule type" value="mRNA"/>
</dbReference>
<dbReference type="EMBL" id="BC087025">
    <property type="protein sequence ID" value="AAH87025.1"/>
    <property type="molecule type" value="mRNA"/>
</dbReference>
<dbReference type="RefSeq" id="NP_036879.1">
    <property type="nucleotide sequence ID" value="NM_012747.3"/>
</dbReference>
<dbReference type="SMR" id="P52631"/>
<dbReference type="BioGRID" id="247196">
    <property type="interactions" value="4"/>
</dbReference>
<dbReference type="CORUM" id="P52631"/>
<dbReference type="DIP" id="DIP-44909N"/>
<dbReference type="FunCoup" id="P52631">
    <property type="interactions" value="2291"/>
</dbReference>
<dbReference type="IntAct" id="P52631">
    <property type="interactions" value="18"/>
</dbReference>
<dbReference type="MINT" id="P52631"/>
<dbReference type="STRING" id="10116.ENSRNOP00000026760"/>
<dbReference type="ChEMBL" id="CHEMBL1764933"/>
<dbReference type="GlyGen" id="P52631">
    <property type="glycosylation" value="1 site"/>
</dbReference>
<dbReference type="iPTMnet" id="P52631"/>
<dbReference type="PhosphoSitePlus" id="P52631"/>
<dbReference type="SwissPalm" id="P52631"/>
<dbReference type="jPOST" id="P52631"/>
<dbReference type="PaxDb" id="10116-ENSRNOP00000026760"/>
<dbReference type="Ensembl" id="ENSRNOT00000026760.5">
    <property type="protein sequence ID" value="ENSRNOP00000026760.3"/>
    <property type="gene ID" value="ENSRNOG00000019742.6"/>
</dbReference>
<dbReference type="GeneID" id="25125"/>
<dbReference type="KEGG" id="rno:25125"/>
<dbReference type="AGR" id="RGD:3772"/>
<dbReference type="CTD" id="6774"/>
<dbReference type="RGD" id="3772">
    <property type="gene designation" value="Stat3"/>
</dbReference>
<dbReference type="eggNOG" id="KOG3667">
    <property type="taxonomic scope" value="Eukaryota"/>
</dbReference>
<dbReference type="GeneTree" id="ENSGT01050000244905"/>
<dbReference type="HOGENOM" id="CLU_014189_3_0_1"/>
<dbReference type="InParanoid" id="P52631"/>
<dbReference type="OrthoDB" id="15994at9989"/>
<dbReference type="PhylomeDB" id="P52631"/>
<dbReference type="TreeFam" id="TF318648"/>
<dbReference type="Reactome" id="R-RNO-1059683">
    <property type="pathway name" value="Interleukin-6 signaling"/>
</dbReference>
<dbReference type="Reactome" id="R-RNO-1266695">
    <property type="pathway name" value="Interleukin-7 signaling"/>
</dbReference>
<dbReference type="Reactome" id="R-RNO-1433557">
    <property type="pathway name" value="Signaling by SCF-KIT"/>
</dbReference>
<dbReference type="Reactome" id="R-RNO-186763">
    <property type="pathway name" value="Downstream signal transduction"/>
</dbReference>
<dbReference type="Reactome" id="R-RNO-201556">
    <property type="pathway name" value="Signaling by ALK"/>
</dbReference>
<dbReference type="Reactome" id="R-RNO-6783783">
    <property type="pathway name" value="Interleukin-10 signaling"/>
</dbReference>
<dbReference type="Reactome" id="R-RNO-6785807">
    <property type="pathway name" value="Interleukin-4 and Interleukin-13 signaling"/>
</dbReference>
<dbReference type="Reactome" id="R-RNO-8849474">
    <property type="pathway name" value="PTK6 Activates STAT3"/>
</dbReference>
<dbReference type="Reactome" id="R-RNO-8854691">
    <property type="pathway name" value="Interleukin-20 family signaling"/>
</dbReference>
<dbReference type="Reactome" id="R-RNO-8875791">
    <property type="pathway name" value="MET activates STAT3"/>
</dbReference>
<dbReference type="Reactome" id="R-RNO-8983432">
    <property type="pathway name" value="Interleukin-15 signaling"/>
</dbReference>
<dbReference type="Reactome" id="R-RNO-8984722">
    <property type="pathway name" value="Interleukin-35 Signalling"/>
</dbReference>
<dbReference type="Reactome" id="R-RNO-8985947">
    <property type="pathway name" value="Interleukin-9 signaling"/>
</dbReference>
<dbReference type="Reactome" id="R-RNO-9008059">
    <property type="pathway name" value="Interleukin-37 signaling"/>
</dbReference>
<dbReference type="Reactome" id="R-RNO-9020933">
    <property type="pathway name" value="Interleukin-23 signaling"/>
</dbReference>
<dbReference type="Reactome" id="R-RNO-9020956">
    <property type="pathway name" value="Interleukin-27 signaling"/>
</dbReference>
<dbReference type="Reactome" id="R-RNO-9020958">
    <property type="pathway name" value="Interleukin-21 signaling"/>
</dbReference>
<dbReference type="Reactome" id="R-RNO-9701898">
    <property type="pathway name" value="STAT3 nuclear events downstream of ALK signaling"/>
</dbReference>
<dbReference type="Reactome" id="R-RNO-9833482">
    <property type="pathway name" value="PKR-mediated signaling"/>
</dbReference>
<dbReference type="PRO" id="PR:P52631"/>
<dbReference type="Proteomes" id="UP000002494">
    <property type="component" value="Chromosome 10"/>
</dbReference>
<dbReference type="Bgee" id="ENSRNOG00000019742">
    <property type="expression patterns" value="Expressed in heart and 20 other cell types or tissues"/>
</dbReference>
<dbReference type="GO" id="GO:0000785">
    <property type="term" value="C:chromatin"/>
    <property type="evidence" value="ECO:0000266"/>
    <property type="project" value="RGD"/>
</dbReference>
<dbReference type="GO" id="GO:0005737">
    <property type="term" value="C:cytoplasm"/>
    <property type="evidence" value="ECO:0000250"/>
    <property type="project" value="UniProtKB"/>
</dbReference>
<dbReference type="GO" id="GO:0005829">
    <property type="term" value="C:cytosol"/>
    <property type="evidence" value="ECO:0000314"/>
    <property type="project" value="RGD"/>
</dbReference>
<dbReference type="GO" id="GO:0098978">
    <property type="term" value="C:glutamatergic synapse"/>
    <property type="evidence" value="ECO:0000314"/>
    <property type="project" value="SynGO"/>
</dbReference>
<dbReference type="GO" id="GO:0005743">
    <property type="term" value="C:mitochondrial inner membrane"/>
    <property type="evidence" value="ECO:0000314"/>
    <property type="project" value="UniProtKB"/>
</dbReference>
<dbReference type="GO" id="GO:0005654">
    <property type="term" value="C:nucleoplasm"/>
    <property type="evidence" value="ECO:0007669"/>
    <property type="project" value="Ensembl"/>
</dbReference>
<dbReference type="GO" id="GO:0005634">
    <property type="term" value="C:nucleus"/>
    <property type="evidence" value="ECO:0000314"/>
    <property type="project" value="UniProtKB"/>
</dbReference>
<dbReference type="GO" id="GO:0005886">
    <property type="term" value="C:plasma membrane"/>
    <property type="evidence" value="ECO:0000250"/>
    <property type="project" value="UniProtKB"/>
</dbReference>
<dbReference type="GO" id="GO:0014069">
    <property type="term" value="C:postsynaptic density"/>
    <property type="evidence" value="ECO:0000314"/>
    <property type="project" value="SynGO"/>
</dbReference>
<dbReference type="GO" id="GO:0032991">
    <property type="term" value="C:protein-containing complex"/>
    <property type="evidence" value="ECO:0000266"/>
    <property type="project" value="RGD"/>
</dbReference>
<dbReference type="GO" id="GO:0090575">
    <property type="term" value="C:RNA polymerase II transcription regulator complex"/>
    <property type="evidence" value="ECO:0000266"/>
    <property type="project" value="RGD"/>
</dbReference>
<dbReference type="GO" id="GO:0098685">
    <property type="term" value="C:Schaffer collateral - CA1 synapse"/>
    <property type="evidence" value="ECO:0000314"/>
    <property type="project" value="SynGO"/>
</dbReference>
<dbReference type="GO" id="GO:0005667">
    <property type="term" value="C:transcription regulator complex"/>
    <property type="evidence" value="ECO:0000266"/>
    <property type="project" value="RGD"/>
</dbReference>
<dbReference type="GO" id="GO:0031730">
    <property type="term" value="F:CCR5 chemokine receptor binding"/>
    <property type="evidence" value="ECO:0000353"/>
    <property type="project" value="RGD"/>
</dbReference>
<dbReference type="GO" id="GO:0031490">
    <property type="term" value="F:chromatin DNA binding"/>
    <property type="evidence" value="ECO:0000250"/>
    <property type="project" value="UniProtKB"/>
</dbReference>
<dbReference type="GO" id="GO:0003677">
    <property type="term" value="F:DNA binding"/>
    <property type="evidence" value="ECO:0000314"/>
    <property type="project" value="RGD"/>
</dbReference>
<dbReference type="GO" id="GO:0001228">
    <property type="term" value="F:DNA-binding transcription activator activity, RNA polymerase II-specific"/>
    <property type="evidence" value="ECO:0000266"/>
    <property type="project" value="RGD"/>
</dbReference>
<dbReference type="GO" id="GO:0003700">
    <property type="term" value="F:DNA-binding transcription factor activity"/>
    <property type="evidence" value="ECO:0000250"/>
    <property type="project" value="UniProtKB"/>
</dbReference>
<dbReference type="GO" id="GO:0000981">
    <property type="term" value="F:DNA-binding transcription factor activity, RNA polymerase II-specific"/>
    <property type="evidence" value="ECO:0000250"/>
    <property type="project" value="UniProtKB"/>
</dbReference>
<dbReference type="GO" id="GO:0140297">
    <property type="term" value="F:DNA-binding transcription factor binding"/>
    <property type="evidence" value="ECO:0000353"/>
    <property type="project" value="RGD"/>
</dbReference>
<dbReference type="GO" id="GO:0042802">
    <property type="term" value="F:identical protein binding"/>
    <property type="evidence" value="ECO:0000266"/>
    <property type="project" value="RGD"/>
</dbReference>
<dbReference type="GO" id="GO:0106222">
    <property type="term" value="F:lncRNA binding"/>
    <property type="evidence" value="ECO:0000266"/>
    <property type="project" value="RGD"/>
</dbReference>
<dbReference type="GO" id="GO:0035259">
    <property type="term" value="F:nuclear glucocorticoid receptor binding"/>
    <property type="evidence" value="ECO:0000353"/>
    <property type="project" value="RGD"/>
</dbReference>
<dbReference type="GO" id="GO:0004879">
    <property type="term" value="F:nuclear receptor activity"/>
    <property type="evidence" value="ECO:0000266"/>
    <property type="project" value="RGD"/>
</dbReference>
<dbReference type="GO" id="GO:0070878">
    <property type="term" value="F:primary miRNA binding"/>
    <property type="evidence" value="ECO:0000266"/>
    <property type="project" value="RGD"/>
</dbReference>
<dbReference type="GO" id="GO:0046983">
    <property type="term" value="F:protein dimerization activity"/>
    <property type="evidence" value="ECO:0000250"/>
    <property type="project" value="UniProtKB"/>
</dbReference>
<dbReference type="GO" id="GO:0042803">
    <property type="term" value="F:protein homodimerization activity"/>
    <property type="evidence" value="ECO:0000250"/>
    <property type="project" value="UniProtKB"/>
</dbReference>
<dbReference type="GO" id="GO:0019901">
    <property type="term" value="F:protein kinase binding"/>
    <property type="evidence" value="ECO:0000250"/>
    <property type="project" value="UniProtKB"/>
</dbReference>
<dbReference type="GO" id="GO:0019903">
    <property type="term" value="F:protein phosphatase binding"/>
    <property type="evidence" value="ECO:0000266"/>
    <property type="project" value="RGD"/>
</dbReference>
<dbReference type="GO" id="GO:0140311">
    <property type="term" value="F:protein sequestering activity"/>
    <property type="evidence" value="ECO:0007669"/>
    <property type="project" value="Ensembl"/>
</dbReference>
<dbReference type="GO" id="GO:0003723">
    <property type="term" value="F:RNA binding"/>
    <property type="evidence" value="ECO:0000266"/>
    <property type="project" value="RGD"/>
</dbReference>
<dbReference type="GO" id="GO:0000978">
    <property type="term" value="F:RNA polymerase II cis-regulatory region sequence-specific DNA binding"/>
    <property type="evidence" value="ECO:0000266"/>
    <property type="project" value="RGD"/>
</dbReference>
<dbReference type="GO" id="GO:0061629">
    <property type="term" value="F:RNA polymerase II-specific DNA-binding transcription factor binding"/>
    <property type="evidence" value="ECO:0000266"/>
    <property type="project" value="RGD"/>
</dbReference>
<dbReference type="GO" id="GO:0140610">
    <property type="term" value="F:RNA sequestering activity"/>
    <property type="evidence" value="ECO:0000266"/>
    <property type="project" value="RGD"/>
</dbReference>
<dbReference type="GO" id="GO:0043565">
    <property type="term" value="F:sequence-specific DNA binding"/>
    <property type="evidence" value="ECO:0000314"/>
    <property type="project" value="RGD"/>
</dbReference>
<dbReference type="GO" id="GO:0035591">
    <property type="term" value="F:signaling adaptor activity"/>
    <property type="evidence" value="ECO:0000266"/>
    <property type="project" value="RGD"/>
</dbReference>
<dbReference type="GO" id="GO:0005102">
    <property type="term" value="F:signaling receptor binding"/>
    <property type="evidence" value="ECO:0000266"/>
    <property type="project" value="RGD"/>
</dbReference>
<dbReference type="GO" id="GO:0000976">
    <property type="term" value="F:transcription cis-regulatory region binding"/>
    <property type="evidence" value="ECO:0000250"/>
    <property type="project" value="UniProtKB"/>
</dbReference>
<dbReference type="GO" id="GO:0006953">
    <property type="term" value="P:acute-phase response"/>
    <property type="evidence" value="ECO:0000270"/>
    <property type="project" value="RGD"/>
</dbReference>
<dbReference type="GO" id="GO:0048708">
    <property type="term" value="P:astrocyte differentiation"/>
    <property type="evidence" value="ECO:0000250"/>
    <property type="project" value="UniProtKB"/>
</dbReference>
<dbReference type="GO" id="GO:0030154">
    <property type="term" value="P:cell differentiation"/>
    <property type="evidence" value="ECO:0000266"/>
    <property type="project" value="RGD"/>
</dbReference>
<dbReference type="GO" id="GO:0008283">
    <property type="term" value="P:cell population proliferation"/>
    <property type="evidence" value="ECO:0000266"/>
    <property type="project" value="RGD"/>
</dbReference>
<dbReference type="GO" id="GO:0007259">
    <property type="term" value="P:cell surface receptor signaling pathway via JAK-STAT"/>
    <property type="evidence" value="ECO:0000266"/>
    <property type="project" value="RGD"/>
</dbReference>
<dbReference type="GO" id="GO:0097696">
    <property type="term" value="P:cell surface receptor signaling pathway via STAT"/>
    <property type="evidence" value="ECO:0000266"/>
    <property type="project" value="RGD"/>
</dbReference>
<dbReference type="GO" id="GO:0071345">
    <property type="term" value="P:cellular response to cytokine stimulus"/>
    <property type="evidence" value="ECO:0000314"/>
    <property type="project" value="MGI"/>
</dbReference>
<dbReference type="GO" id="GO:0032870">
    <property type="term" value="P:cellular response to hormone stimulus"/>
    <property type="evidence" value="ECO:0000266"/>
    <property type="project" value="RGD"/>
</dbReference>
<dbReference type="GO" id="GO:0097398">
    <property type="term" value="P:cellular response to interleukin-17"/>
    <property type="evidence" value="ECO:0000266"/>
    <property type="project" value="RGD"/>
</dbReference>
<dbReference type="GO" id="GO:0044320">
    <property type="term" value="P:cellular response to leptin stimulus"/>
    <property type="evidence" value="ECO:0000250"/>
    <property type="project" value="UniProtKB"/>
</dbReference>
<dbReference type="GO" id="GO:0006952">
    <property type="term" value="P:defense response"/>
    <property type="evidence" value="ECO:0000318"/>
    <property type="project" value="GO_Central"/>
</dbReference>
<dbReference type="GO" id="GO:0042755">
    <property type="term" value="P:eating behavior"/>
    <property type="evidence" value="ECO:0000250"/>
    <property type="project" value="UniProtKB"/>
</dbReference>
<dbReference type="GO" id="GO:0097009">
    <property type="term" value="P:energy homeostasis"/>
    <property type="evidence" value="ECO:0000250"/>
    <property type="project" value="UniProtKB"/>
</dbReference>
<dbReference type="GO" id="GO:0001754">
    <property type="term" value="P:eye photoreceptor cell differentiation"/>
    <property type="evidence" value="ECO:0000250"/>
    <property type="project" value="UniProtKB"/>
</dbReference>
<dbReference type="GO" id="GO:0010467">
    <property type="term" value="P:gene expression"/>
    <property type="evidence" value="ECO:0000266"/>
    <property type="project" value="RGD"/>
</dbReference>
<dbReference type="GO" id="GO:0042593">
    <property type="term" value="P:glucose homeostasis"/>
    <property type="evidence" value="ECO:0000250"/>
    <property type="project" value="UniProtKB"/>
</dbReference>
<dbReference type="GO" id="GO:0060396">
    <property type="term" value="P:growth hormone receptor signaling pathway"/>
    <property type="evidence" value="ECO:0000266"/>
    <property type="project" value="RGD"/>
</dbReference>
<dbReference type="GO" id="GO:0060397">
    <property type="term" value="P:growth hormone receptor signaling pathway via JAK-STAT"/>
    <property type="evidence" value="ECO:0000250"/>
    <property type="project" value="UniProtKB"/>
</dbReference>
<dbReference type="GO" id="GO:0006954">
    <property type="term" value="P:inflammatory response"/>
    <property type="evidence" value="ECO:0000250"/>
    <property type="project" value="UniProtKB"/>
</dbReference>
<dbReference type="GO" id="GO:0140105">
    <property type="term" value="P:interleukin-10-mediated signaling pathway"/>
    <property type="evidence" value="ECO:0000266"/>
    <property type="project" value="RGD"/>
</dbReference>
<dbReference type="GO" id="GO:0038154">
    <property type="term" value="P:interleukin-11-mediated signaling pathway"/>
    <property type="evidence" value="ECO:0000266"/>
    <property type="project" value="RGD"/>
</dbReference>
<dbReference type="GO" id="GO:0035723">
    <property type="term" value="P:interleukin-15-mediated signaling pathway"/>
    <property type="evidence" value="ECO:0000266"/>
    <property type="project" value="RGD"/>
</dbReference>
<dbReference type="GO" id="GO:0038110">
    <property type="term" value="P:interleukin-2-mediated signaling pathway"/>
    <property type="evidence" value="ECO:0000266"/>
    <property type="project" value="RGD"/>
</dbReference>
<dbReference type="GO" id="GO:0038155">
    <property type="term" value="P:interleukin-23-mediated signaling pathway"/>
    <property type="evidence" value="ECO:0000266"/>
    <property type="project" value="RGD"/>
</dbReference>
<dbReference type="GO" id="GO:0070102">
    <property type="term" value="P:interleukin-6-mediated signaling pathway"/>
    <property type="evidence" value="ECO:0000250"/>
    <property type="project" value="UniProtKB"/>
</dbReference>
<dbReference type="GO" id="GO:0038113">
    <property type="term" value="P:interleukin-9-mediated signaling pathway"/>
    <property type="evidence" value="ECO:0000266"/>
    <property type="project" value="RGD"/>
</dbReference>
<dbReference type="GO" id="GO:0030522">
    <property type="term" value="P:intracellular receptor signaling pathway"/>
    <property type="evidence" value="ECO:0000266"/>
    <property type="project" value="RGD"/>
</dbReference>
<dbReference type="GO" id="GO:0033210">
    <property type="term" value="P:leptin-mediated signaling pathway"/>
    <property type="evidence" value="ECO:0000250"/>
    <property type="project" value="UniProtKB"/>
</dbReference>
<dbReference type="GO" id="GO:0050804">
    <property type="term" value="P:modulation of chemical synaptic transmission"/>
    <property type="evidence" value="ECO:0000314"/>
    <property type="project" value="SynGO"/>
</dbReference>
<dbReference type="GO" id="GO:0042789">
    <property type="term" value="P:mRNA transcription by RNA polymerase II"/>
    <property type="evidence" value="ECO:0000266"/>
    <property type="project" value="RGD"/>
</dbReference>
<dbReference type="GO" id="GO:0010507">
    <property type="term" value="P:negative regulation of autophagy"/>
    <property type="evidence" value="ECO:0000266"/>
    <property type="project" value="RGD"/>
</dbReference>
<dbReference type="GO" id="GO:0043124">
    <property type="term" value="P:negative regulation of canonical NF-kappaB signal transduction"/>
    <property type="evidence" value="ECO:0007669"/>
    <property type="project" value="Ensembl"/>
</dbReference>
<dbReference type="GO" id="GO:0008285">
    <property type="term" value="P:negative regulation of cell population proliferation"/>
    <property type="evidence" value="ECO:0000266"/>
    <property type="project" value="RGD"/>
</dbReference>
<dbReference type="GO" id="GO:1900016">
    <property type="term" value="P:negative regulation of cytokine production involved in inflammatory response"/>
    <property type="evidence" value="ECO:0007669"/>
    <property type="project" value="Ensembl"/>
</dbReference>
<dbReference type="GO" id="GO:0010629">
    <property type="term" value="P:negative regulation of gene expression"/>
    <property type="evidence" value="ECO:0000266"/>
    <property type="project" value="RGD"/>
</dbReference>
<dbReference type="GO" id="GO:0045820">
    <property type="term" value="P:negative regulation of glycolytic process"/>
    <property type="evidence" value="ECO:0000266"/>
    <property type="project" value="RGD"/>
</dbReference>
<dbReference type="GO" id="GO:0010730">
    <property type="term" value="P:negative regulation of hydrogen peroxide biosynthetic process"/>
    <property type="evidence" value="ECO:0000315"/>
    <property type="project" value="RGD"/>
</dbReference>
<dbReference type="GO" id="GO:0050728">
    <property type="term" value="P:negative regulation of inflammatory response"/>
    <property type="evidence" value="ECO:0000266"/>
    <property type="project" value="RGD"/>
</dbReference>
<dbReference type="GO" id="GO:0106015">
    <property type="term" value="P:negative regulation of inflammatory response to wounding"/>
    <property type="evidence" value="ECO:0000266"/>
    <property type="project" value="RGD"/>
</dbReference>
<dbReference type="GO" id="GO:2001223">
    <property type="term" value="P:negative regulation of neuron migration"/>
    <property type="evidence" value="ECO:0000266"/>
    <property type="project" value="RGD"/>
</dbReference>
<dbReference type="GO" id="GO:2000635">
    <property type="term" value="P:negative regulation of primary miRNA processing"/>
    <property type="evidence" value="ECO:0000266"/>
    <property type="project" value="RGD"/>
</dbReference>
<dbReference type="GO" id="GO:2000737">
    <property type="term" value="P:negative regulation of stem cell differentiation"/>
    <property type="evidence" value="ECO:0000266"/>
    <property type="project" value="RGD"/>
</dbReference>
<dbReference type="GO" id="GO:0043491">
    <property type="term" value="P:phosphatidylinositol 3-kinase/protein kinase B signal transduction"/>
    <property type="evidence" value="ECO:0000266"/>
    <property type="project" value="RGD"/>
</dbReference>
<dbReference type="GO" id="GO:0016310">
    <property type="term" value="P:phosphorylation"/>
    <property type="evidence" value="ECO:0000250"/>
    <property type="project" value="UniProtKB"/>
</dbReference>
<dbReference type="GO" id="GO:0045766">
    <property type="term" value="P:positive regulation of angiogenesis"/>
    <property type="evidence" value="ECO:0000266"/>
    <property type="project" value="RGD"/>
</dbReference>
<dbReference type="GO" id="GO:2001171">
    <property type="term" value="P:positive regulation of ATP biosynthetic process"/>
    <property type="evidence" value="ECO:0000315"/>
    <property type="project" value="RGD"/>
</dbReference>
<dbReference type="GO" id="GO:0043123">
    <property type="term" value="P:positive regulation of canonical NF-kappaB signal transduction"/>
    <property type="evidence" value="ECO:0000316"/>
    <property type="project" value="ARUK-UCL"/>
</dbReference>
<dbReference type="GO" id="GO:0030335">
    <property type="term" value="P:positive regulation of cell migration"/>
    <property type="evidence" value="ECO:0000266"/>
    <property type="project" value="RGD"/>
</dbReference>
<dbReference type="GO" id="GO:0008284">
    <property type="term" value="P:positive regulation of cell population proliferation"/>
    <property type="evidence" value="ECO:0000315"/>
    <property type="project" value="RGD"/>
</dbReference>
<dbReference type="GO" id="GO:1900017">
    <property type="term" value="P:positive regulation of cytokine production involved in inflammatory response"/>
    <property type="evidence" value="ECO:0000266"/>
    <property type="project" value="RGD"/>
</dbReference>
<dbReference type="GO" id="GO:0045893">
    <property type="term" value="P:positive regulation of DNA-templated transcription"/>
    <property type="evidence" value="ECO:0000250"/>
    <property type="project" value="UniProtKB"/>
</dbReference>
<dbReference type="GO" id="GO:0045648">
    <property type="term" value="P:positive regulation of erythrocyte differentiation"/>
    <property type="evidence" value="ECO:0000250"/>
    <property type="project" value="UniProtKB"/>
</dbReference>
<dbReference type="GO" id="GO:0010628">
    <property type="term" value="P:positive regulation of gene expression"/>
    <property type="evidence" value="ECO:0000266"/>
    <property type="project" value="RGD"/>
</dbReference>
<dbReference type="GO" id="GO:1902728">
    <property type="term" value="P:positive regulation of growth factor dependent skeletal muscle satellite cell proliferation"/>
    <property type="evidence" value="ECO:0000315"/>
    <property type="project" value="RGD"/>
</dbReference>
<dbReference type="GO" id="GO:0032731">
    <property type="term" value="P:positive regulation of interleukin-1 beta production"/>
    <property type="evidence" value="ECO:0000266"/>
    <property type="project" value="RGD"/>
</dbReference>
<dbReference type="GO" id="GO:0032733">
    <property type="term" value="P:positive regulation of interleukin-10 production"/>
    <property type="evidence" value="ECO:0000266"/>
    <property type="project" value="RGD"/>
</dbReference>
<dbReference type="GO" id="GO:0032755">
    <property type="term" value="P:positive regulation of interleukin-6 production"/>
    <property type="evidence" value="ECO:0000316"/>
    <property type="project" value="ARUK-UCL"/>
</dbReference>
<dbReference type="GO" id="GO:0032757">
    <property type="term" value="P:positive regulation of interleukin-8 production"/>
    <property type="evidence" value="ECO:0000266"/>
    <property type="project" value="RGD"/>
</dbReference>
<dbReference type="GO" id="GO:1902895">
    <property type="term" value="P:positive regulation of miRNA transcription"/>
    <property type="evidence" value="ECO:0000266"/>
    <property type="project" value="RGD"/>
</dbReference>
<dbReference type="GO" id="GO:0045747">
    <property type="term" value="P:positive regulation of Notch signaling pathway"/>
    <property type="evidence" value="ECO:0000250"/>
    <property type="project" value="UniProtKB"/>
</dbReference>
<dbReference type="GO" id="GO:0050766">
    <property type="term" value="P:positive regulation of phagocytosis"/>
    <property type="evidence" value="ECO:0000266"/>
    <property type="project" value="RGD"/>
</dbReference>
<dbReference type="GO" id="GO:0045944">
    <property type="term" value="P:positive regulation of transcription by RNA polymerase II"/>
    <property type="evidence" value="ECO:0000314"/>
    <property type="project" value="UniProtKB"/>
</dbReference>
<dbReference type="GO" id="GO:0032760">
    <property type="term" value="P:positive regulation of tumor necrosis factor production"/>
    <property type="evidence" value="ECO:0000266"/>
    <property type="project" value="RGD"/>
</dbReference>
<dbReference type="GO" id="GO:1905564">
    <property type="term" value="P:positive regulation of vascular endothelial cell proliferation"/>
    <property type="evidence" value="ECO:0000266"/>
    <property type="project" value="RGD"/>
</dbReference>
<dbReference type="GO" id="GO:0010575">
    <property type="term" value="P:positive regulation of vascular endothelial growth factor production"/>
    <property type="evidence" value="ECO:0000266"/>
    <property type="project" value="RGD"/>
</dbReference>
<dbReference type="GO" id="GO:0099527">
    <property type="term" value="P:postsynapse to nucleus signaling pathway"/>
    <property type="evidence" value="ECO:0000314"/>
    <property type="project" value="SynGO"/>
</dbReference>
<dbReference type="GO" id="GO:0006606">
    <property type="term" value="P:protein import into nucleus"/>
    <property type="evidence" value="ECO:0000250"/>
    <property type="project" value="UniProtKB"/>
</dbReference>
<dbReference type="GO" id="GO:0060019">
    <property type="term" value="P:radial glial cell differentiation"/>
    <property type="evidence" value="ECO:0000250"/>
    <property type="project" value="UniProtKB"/>
</dbReference>
<dbReference type="GO" id="GO:0051726">
    <property type="term" value="P:regulation of cell cycle"/>
    <property type="evidence" value="ECO:0000250"/>
    <property type="project" value="UniProtKB"/>
</dbReference>
<dbReference type="GO" id="GO:0042127">
    <property type="term" value="P:regulation of cell population proliferation"/>
    <property type="evidence" value="ECO:0000318"/>
    <property type="project" value="GO_Central"/>
</dbReference>
<dbReference type="GO" id="GO:1900037">
    <property type="term" value="P:regulation of cellular response to hypoxia"/>
    <property type="evidence" value="ECO:0000315"/>
    <property type="project" value="RGD"/>
</dbReference>
<dbReference type="GO" id="GO:0006355">
    <property type="term" value="P:regulation of DNA-templated transcription"/>
    <property type="evidence" value="ECO:0000250"/>
    <property type="project" value="UniProtKB"/>
</dbReference>
<dbReference type="GO" id="GO:0060259">
    <property type="term" value="P:regulation of feeding behavior"/>
    <property type="evidence" value="ECO:0000250"/>
    <property type="project" value="UniProtKB"/>
</dbReference>
<dbReference type="GO" id="GO:0046902">
    <property type="term" value="P:regulation of mitochondrial membrane permeability"/>
    <property type="evidence" value="ECO:0000315"/>
    <property type="project" value="RGD"/>
</dbReference>
<dbReference type="GO" id="GO:0040014">
    <property type="term" value="P:regulation of multicellular organism growth"/>
    <property type="evidence" value="ECO:0000266"/>
    <property type="project" value="RGD"/>
</dbReference>
<dbReference type="GO" id="GO:0006357">
    <property type="term" value="P:regulation of transcription by RNA polymerase II"/>
    <property type="evidence" value="ECO:0000250"/>
    <property type="project" value="UniProtKB"/>
</dbReference>
<dbReference type="GO" id="GO:0034097">
    <property type="term" value="P:response to cytokine"/>
    <property type="evidence" value="ECO:0000314"/>
    <property type="project" value="RGD"/>
</dbReference>
<dbReference type="GO" id="GO:0032355">
    <property type="term" value="P:response to estradiol"/>
    <property type="evidence" value="ECO:0000270"/>
    <property type="project" value="RGD"/>
</dbReference>
<dbReference type="GO" id="GO:0045471">
    <property type="term" value="P:response to ethanol"/>
    <property type="evidence" value="ECO:0000270"/>
    <property type="project" value="RGD"/>
</dbReference>
<dbReference type="GO" id="GO:0001666">
    <property type="term" value="P:response to hypoxia"/>
    <property type="evidence" value="ECO:0000270"/>
    <property type="project" value="RGD"/>
</dbReference>
<dbReference type="GO" id="GO:0002931">
    <property type="term" value="P:response to ischemia"/>
    <property type="evidence" value="ECO:0000315"/>
    <property type="project" value="RGD"/>
</dbReference>
<dbReference type="GO" id="GO:0044321">
    <property type="term" value="P:response to leptin"/>
    <property type="evidence" value="ECO:0000250"/>
    <property type="project" value="UniProtKB"/>
</dbReference>
<dbReference type="GO" id="GO:0043434">
    <property type="term" value="P:response to peptide hormone"/>
    <property type="evidence" value="ECO:0000270"/>
    <property type="project" value="RGD"/>
</dbReference>
<dbReference type="GO" id="GO:0060221">
    <property type="term" value="P:retinal rod cell differentiation"/>
    <property type="evidence" value="ECO:0000266"/>
    <property type="project" value="RGD"/>
</dbReference>
<dbReference type="GO" id="GO:0019953">
    <property type="term" value="P:sexual reproduction"/>
    <property type="evidence" value="ECO:0000250"/>
    <property type="project" value="UniProtKB"/>
</dbReference>
<dbReference type="GO" id="GO:0035019">
    <property type="term" value="P:somatic stem cell population maintenance"/>
    <property type="evidence" value="ECO:0000266"/>
    <property type="project" value="RGD"/>
</dbReference>
<dbReference type="GO" id="GO:0072540">
    <property type="term" value="P:T-helper 17 cell lineage commitment"/>
    <property type="evidence" value="ECO:0000250"/>
    <property type="project" value="UniProtKB"/>
</dbReference>
<dbReference type="GO" id="GO:0072538">
    <property type="term" value="P:T-helper 17 type immune response"/>
    <property type="evidence" value="ECO:0000266"/>
    <property type="project" value="RGD"/>
</dbReference>
<dbReference type="GO" id="GO:0001659">
    <property type="term" value="P:temperature homeostasis"/>
    <property type="evidence" value="ECO:0000250"/>
    <property type="project" value="UniProtKB"/>
</dbReference>
<dbReference type="GO" id="GO:0006366">
    <property type="term" value="P:transcription by RNA polymerase II"/>
    <property type="evidence" value="ECO:0000266"/>
    <property type="project" value="RGD"/>
</dbReference>
<dbReference type="GO" id="GO:0007179">
    <property type="term" value="P:transforming growth factor beta receptor signaling pathway"/>
    <property type="evidence" value="ECO:0000266"/>
    <property type="project" value="RGD"/>
</dbReference>
<dbReference type="CDD" id="cd10374">
    <property type="entry name" value="SH2_STAT3"/>
    <property type="match status" value="1"/>
</dbReference>
<dbReference type="CDD" id="cd16853">
    <property type="entry name" value="STAT3_CCD"/>
    <property type="match status" value="1"/>
</dbReference>
<dbReference type="CDD" id="cd16847">
    <property type="entry name" value="STAT3_DBD"/>
    <property type="match status" value="1"/>
</dbReference>
<dbReference type="FunFam" id="1.10.238.10:FF:000012">
    <property type="entry name" value="Signal transducer and activator of transcription"/>
    <property type="match status" value="1"/>
</dbReference>
<dbReference type="FunFam" id="1.10.532.10:FF:000001">
    <property type="entry name" value="Signal transducer and activator of transcription"/>
    <property type="match status" value="1"/>
</dbReference>
<dbReference type="FunFam" id="1.20.1050.20:FF:000003">
    <property type="entry name" value="Signal transducer and activator of transcription"/>
    <property type="match status" value="1"/>
</dbReference>
<dbReference type="FunFam" id="3.30.505.10:FF:000003">
    <property type="entry name" value="Signal transducer and activator of transcription"/>
    <property type="match status" value="1"/>
</dbReference>
<dbReference type="FunFam" id="2.60.40.630:FF:000012">
    <property type="entry name" value="Signal transducer and activator of transcription 3"/>
    <property type="match status" value="1"/>
</dbReference>
<dbReference type="Gene3D" id="1.10.238.10">
    <property type="entry name" value="EF-hand"/>
    <property type="match status" value="1"/>
</dbReference>
<dbReference type="Gene3D" id="3.30.505.10">
    <property type="entry name" value="SH2 domain"/>
    <property type="match status" value="1"/>
</dbReference>
<dbReference type="Gene3D" id="1.20.1050.20">
    <property type="entry name" value="STAT transcription factor, all-alpha domain"/>
    <property type="match status" value="1"/>
</dbReference>
<dbReference type="Gene3D" id="2.60.40.630">
    <property type="entry name" value="STAT transcription factor, DNA-binding domain"/>
    <property type="match status" value="1"/>
</dbReference>
<dbReference type="Gene3D" id="1.10.532.10">
    <property type="entry name" value="STAT transcription factor, N-terminal domain"/>
    <property type="match status" value="1"/>
</dbReference>
<dbReference type="InterPro" id="IPR008967">
    <property type="entry name" value="p53-like_TF_DNA-bd_sf"/>
</dbReference>
<dbReference type="InterPro" id="IPR000980">
    <property type="entry name" value="SH2"/>
</dbReference>
<dbReference type="InterPro" id="IPR036860">
    <property type="entry name" value="SH2_dom_sf"/>
</dbReference>
<dbReference type="InterPro" id="IPR001217">
    <property type="entry name" value="STAT"/>
</dbReference>
<dbReference type="InterPro" id="IPR035855">
    <property type="entry name" value="STAT3_SH2"/>
</dbReference>
<dbReference type="InterPro" id="IPR048988">
    <property type="entry name" value="STAT_linker"/>
</dbReference>
<dbReference type="InterPro" id="IPR036535">
    <property type="entry name" value="STAT_N_sf"/>
</dbReference>
<dbReference type="InterPro" id="IPR013800">
    <property type="entry name" value="STAT_TF_alpha"/>
</dbReference>
<dbReference type="InterPro" id="IPR015988">
    <property type="entry name" value="STAT_TF_coiled-coil"/>
</dbReference>
<dbReference type="InterPro" id="IPR013801">
    <property type="entry name" value="STAT_TF_DNA-bd"/>
</dbReference>
<dbReference type="InterPro" id="IPR012345">
    <property type="entry name" value="STAT_TF_DNA-bd_N"/>
</dbReference>
<dbReference type="InterPro" id="IPR013799">
    <property type="entry name" value="STAT_TF_prot_interaction"/>
</dbReference>
<dbReference type="PANTHER" id="PTHR11801">
    <property type="entry name" value="SIGNAL TRANSDUCER AND ACTIVATOR OF TRANSCRIPTION"/>
    <property type="match status" value="1"/>
</dbReference>
<dbReference type="Pfam" id="PF00017">
    <property type="entry name" value="SH2"/>
    <property type="match status" value="1"/>
</dbReference>
<dbReference type="Pfam" id="PF01017">
    <property type="entry name" value="STAT_alpha"/>
    <property type="match status" value="1"/>
</dbReference>
<dbReference type="Pfam" id="PF02864">
    <property type="entry name" value="STAT_bind"/>
    <property type="match status" value="1"/>
</dbReference>
<dbReference type="Pfam" id="PF02865">
    <property type="entry name" value="STAT_int"/>
    <property type="match status" value="1"/>
</dbReference>
<dbReference type="Pfam" id="PF21354">
    <property type="entry name" value="STAT_linker"/>
    <property type="match status" value="1"/>
</dbReference>
<dbReference type="SMART" id="SM00964">
    <property type="entry name" value="STAT_int"/>
    <property type="match status" value="1"/>
</dbReference>
<dbReference type="SUPFAM" id="SSF49417">
    <property type="entry name" value="p53-like transcription factors"/>
    <property type="match status" value="1"/>
</dbReference>
<dbReference type="SUPFAM" id="SSF55550">
    <property type="entry name" value="SH2 domain"/>
    <property type="match status" value="1"/>
</dbReference>
<dbReference type="SUPFAM" id="SSF47655">
    <property type="entry name" value="STAT"/>
    <property type="match status" value="1"/>
</dbReference>
<dbReference type="SUPFAM" id="SSF48092">
    <property type="entry name" value="Transcription factor STAT-4 N-domain"/>
    <property type="match status" value="1"/>
</dbReference>
<dbReference type="PROSITE" id="PS50001">
    <property type="entry name" value="SH2"/>
    <property type="match status" value="1"/>
</dbReference>
<reference key="1">
    <citation type="journal article" date="1995" name="J. Biol. Chem.">
        <title>Transcription factors Stat3 and Stat5b are present in rat liver nuclei late in an acute phase response and bind interleukin-6 response elements.</title>
        <authorList>
            <person name="Ripperger J.A."/>
            <person name="Fritz S."/>
            <person name="Richter K."/>
            <person name="Hocke G.M."/>
            <person name="Lottspeich F."/>
            <person name="Fey G.H."/>
        </authorList>
    </citation>
    <scope>NUCLEOTIDE SEQUENCE [MRNA]</scope>
    <source>
        <tissue>Liver</tissue>
    </source>
</reference>
<reference key="2">
    <citation type="journal article" date="2004" name="Genome Res.">
        <title>The status, quality, and expansion of the NIH full-length cDNA project: the Mammalian Gene Collection (MGC).</title>
        <authorList>
            <consortium name="The MGC Project Team"/>
        </authorList>
    </citation>
    <scope>NUCLEOTIDE SEQUENCE [LARGE SCALE MRNA]</scope>
    <source>
        <tissue>Kidney</tissue>
    </source>
</reference>
<reference key="3">
    <citation type="journal article" date="2009" name="Biochim. Biophys. Acta">
        <title>Caveolin-2 regulation of STAT3 transcriptional activation in response to insulin.</title>
        <authorList>
            <person name="Kwon H."/>
            <person name="Jeong K."/>
            <person name="Hwang E.M."/>
            <person name="Park J.-Y."/>
            <person name="Hong S.-G."/>
            <person name="Choi W.-S."/>
            <person name="Pak Y."/>
        </authorList>
    </citation>
    <scope>INTERACTION WITH CAV2</scope>
</reference>
<reference key="4">
    <citation type="journal article" date="2010" name="J. Cell. Mol. Med.">
        <title>Cross-talk between calcineurin/NFAT and Jak/STAT signalling induces cardioprotective alphaB-crystallin gene expression in response to hypertrophic stimuli.</title>
        <authorList>
            <person name="Manukyan I."/>
            <person name="Galatioto J."/>
            <person name="Mascareno E."/>
            <person name="Bhaduri S."/>
            <person name="Siddiqui M.A."/>
        </authorList>
    </citation>
    <scope>FUNCTION</scope>
    <scope>SUBCELLULAR LOCATION</scope>
    <scope>TISSUE SPECIFICITY</scope>
</reference>
<sequence>MAQWNQLQQLDTRYLEQLHQLYSDSFPMELRQFLAPWIESQDWAYAASKESHATLVFHNLLGEIDQQYSRFLQESNVLYQHNLRRIKQFLQSRYLEKPMEIARIVARCLWEESRLLQTAATAAQQGGQANHPTAAVVTEKQQMLEQHLQDVRKRVQDLEQKMKVVENLQDDFDFNYKTLKSQGDMQDLNGNNQSVTRQKMQQLEQMLTALDQMRRSIVSELAGLLSAMEYVQKTLTDEELADWKRRQQIACIGGPPNICLDRLENWITSLAESQLQTRQQIKKLEELQQKVSYKGDPIVQHRPMLEERIVDLFRNLMKSAFVVERQPCMPMHPDRPLVIKTGVQFTTKVRLLVKFPELNYQLKIKVCIDKDSGDVAALRGSRKFNILGTNTKVMNMEESNNGSLSAEFKHLTLREQRCGNGGRANCDASLIVTEELHLITFETEVYHQGLKIDLETHSLPVVVISNICQMPNAWASILWYNMLTNNPKNVNFFTKPPIGTWDQVAEVLSWQFSSTTKRGLSIEQLTTLAEKLLGPGVNYSGCQITWAKFCKENMAGKGFSFWVWLDNIIDLVKKYILALWNEGYIMGFISKERERAILSTKPPGTFLLRFSESSKEGGVTFTWVEKDISGKTQIQSVEPYTKQQLNNMSFAEIIMGYKIMDATNILVSPLVYLYPDIPKEEAFGKYCRPESQEHPEADPGSAAPYLKTKFICVTPTTCSNTIDLPMSPRTLDSLMQFGNNGEGAEPSAGGQFESLTFDMDLTSECATSPM</sequence>
<comment type="function">
    <text evidence="2 3 6">Signal transducer and transcription activator that mediates cellular responses to interleukins, KITLG/SCF, LEP and other growth factors. Once activated, recruits coactivators, such as NCOA1 or MED1, to the promoter region of the target gene. May mediate cellular responses to activated FGFR1, FGFR2, FGFR3 and FGFR4. Upon activation of IL6ST/gp130 signaling by interleukin-6 (IL6), binds to the IL6-responsive elements identified in the promoters of various acute-phase protein genes. Activated by IL31 through IL31RA (By similarity). Acts as a regulator of inflammatory response by regulating differentiation of naive CD4(+) T-cells into T-helper Th17 or regulatory T-cells (Treg): acetylation promotes its transcription activity and cell differentiation while deacetylation and oxidation of lysine residues by LOXL3 inhibits differentiation (By similarity). Involved in cell cycle regulation by inducing the expression of key genes for the progression from G1 to S phase, such as CCND1 (By similarity). Mediates the effects of LEP on melanocortin production, body energy homeostasis and lactation. May play an apoptotic role by transctivating BIRC5 expression under LEP activation (By similarity). Cytoplasmic STAT3 represses macroautophagy by inhibiting EIF2AK2/PKR activity (By similarity). Plays a crucial role in basal beta cell functions, such as regulation of insulin secretion. Following JAK/STAT signaling activation and as part of a complex with NFATC3 and NFATC4, binds to the alpha-beta E4 promoter region of CRYAB and activates transcription in cardiomyocytes (PubMed:19538478). Plays an important role in host defense in methicillin-resistant S.aureus lung infection by regulating the expression of the antimicrobial lectin REG3G (By similarity).</text>
</comment>
<comment type="subunit">
    <text evidence="2 3 5">Forms a homodimer or a heterodimer with a related family member (at least STAT1). Component of a promoter-binding complex composed of STAT3, NFATC3 and NFATC4; complex formation is enhanced by calcineurin (By similarity). Interacts with IL31RA, NCOA1, PELP1, SIPAR, SOCS7, STATIP1 and TMF1. Interacts with IL23R in presence of IL23. Interacts (via SH2 domain) with NLK. Interacts with ARL2BP; the interaction is enhanced by LIF and JAK1 expression (By similarity). Interacts with KPNA4 and KPNA5; KPNA4 may be the primary mediator of nuclear import (By similarity). Interacts with CAV2; the interaction is increased on insulin-induced tyrosine phosphorylation of CAV2 and leads to STAT3 activation (PubMed:19427337). Interacts with ARL2BP; interaction is enhanced with ARL2. Interacts with NEK6 (By similarity). Binds to CDK9 when activated and nuclear. Interacts with BMX. Interacts with ZIPK/DAPK3. Interacts with PIAS3; the interaction occurs on stimulation by IL6, CNTF or OSM and inhibits the DNA binding activity of STAT3. In prostate cancer cells, interacts with PRKCE and promotes DNA binding activity of STAT3 (By similarity). Interacts with STMN3, antagonizing its microtubule-destabilizing activity (By similarity). Interacts with the 'Lys-129' acetylated form of BIRC5/survivin. Interacts with FER. Interacts (via SH2 domain) with EIF2AK2/PKR (via the kinase catalytic domain) (By similarity). Interacts with FGFR4 (By similarity). Interacts with INPP5F; the interaction is independent of STAT3 Tyr-705 phosphorylation status (By similarity). Interacts with OCIAD1 and OCIAD2 (By similarity). Interacts (unphosphorylated or phosphorylated at Ser-727) with PHB1 (By similarity). Interacts and may form heterodimers with NHLH1 (By similarity). Found in a complex with SLC39A6, SLC39A10 and with the 'Ser-727' phosphorylated form of STAT3 throughout mitosis (By similarity). Interacts (when acetylated) with EP300 (via bromo domain); interaction takes place following STAT3 acetylation by EP300 and promotes enhanceosome assembly (By similarity). Interacts (when acetylated) with BRD2 (via bromo domain); interaction promotes STAT3 recruitment to chromatin and T-helper Th17 cell differentiation (By similarity). Interacts with FAM220A/SIPAR; the interaction occurs in both the nucleus and the cytoplasm, is enhanced by IL6 and promotes STAT3 dephosphorylation (By similarity). Interacts in both unphosphorylated and phosphorylated forms with FAM220A but interacts preferentially in the phosphorylated form in the nucleus (By similarity). Interacts with PTPN2; the interaction is promoted by FAM220A and leads to STAT3 dephosphorylation which negatively regulates STAT3 transcriptional activator activity (By similarity).</text>
</comment>
<comment type="interaction">
    <interactant intactId="EBI-10764775">
        <id>P52631</id>
    </interactant>
    <interactant intactId="EBI-15667006">
        <id>O13097</id>
        <label>efnb1</label>
    </interactant>
    <organismsDiffer>true</organismsDiffer>
    <experiments>4</experiments>
</comment>
<comment type="subcellular location">
    <subcellularLocation>
        <location evidence="6">Cytoplasm</location>
    </subcellularLocation>
    <subcellularLocation>
        <location evidence="6">Nucleus</location>
    </subcellularLocation>
    <text evidence="2 6">Shuttles between the nucleus and the cytoplasm. Translocated into the nucleus upon tyrosine phosphorylation and dimerization, in response to signaling by activated FGFR1, FGFR2, FGFR3 or FGFR4. Constitutive nuclear presence is independent of tyrosine phosphorylation. Predominantly present in the cytoplasm without stimuli. Upon leukemia inhibitory factor (LIF) stimulation, accumulates in the nucleus. The complex composed of BART and ARL2 plays an important role in the nuclear translocation and retention of STAT3 (By similarity). Translocates to the nucleus in the presence of EDN1 (PubMed:19538478).</text>
</comment>
<comment type="tissue specificity">
    <text evidence="6">Detected in lung, heart, oviduct, ovary, uterus and kidney (at protein level). Expressed in cardiomyocytes (at protein level) (PubMed:19538478). Detected in ovary, oviduct, and at lower levels in uterus and lung.</text>
</comment>
<comment type="PTM">
    <text evidence="2 3">Activated through tyrosine phosphorylation by BMX. Tyrosine phosphorylated in response to IL6, IL11, CNTF, LIF, KITLG/SCF, CSF1, EGF, PDGF, IFN-alpha and OSM. Activated KIT promotes phosphorylation on tyrosine residues and subsequent translocation to the nucleus. Tyrosine phosphorylated in response to constitutively activated FGFR1, FGFR2, FGFR3 and FGFR4. Phosphorylated on serine upon DNA damage, probably by ATM or ATR. Serine phosphorylation is important for the formation of stable DNA-binding STAT3 homodimers and maximal transcriptional activity. ARL2BP may participate in keeping the phosphorylated state of STAT3 within the nucleus. Tyrosine phosphorylated upon stimulation with EGF. Upon LPS challenge, phosphorylated within the nucleus by IRAK1. Phosphorylated on Ser-727 by RPS6KA5 (By similarity). Dephosphorylation on tyrosine residues by PTPN2 negatively regulates IL6/interleukin-6 signaling (By similarity). Phosphorylation at Tyr-705 by FER, isoform M2 of PKM (PKM2) or PTK6 leads to an increase of its transcriptional activity. Phosphorylation at Tyr-705 is increased in the presence of calcineurin (By similarity). Phosphorylation at Tyr-640 by TYK2 negatively regulates transcriptional activity (By similarity).</text>
</comment>
<comment type="PTM">
    <text evidence="2">Acetylated on lysine residues by EP300/p300, promoting its activation (By similarity). Acetylation at Lys-49 and Lys-87 by EP300/p300 promotes its activation (By similarity). Acetylation at Lys-87 by EP300/p300 promotes its association with BRD2 and recruitment to chromatin (By similarity). Deacetylated at Lys-49 and Lys-87 by HDAC1 (By similarity). Acetylation at Lys-685 by EP300/p300 promotes its homodimerization and activation (By similarity). Deacetylated at Lys-685 by HDAC3 (By similarity). Acetylated on lysine residues by CREBBP (By similarity). Deacetylation by LOXL3 leads to disrupt STAT3 dimerization and inhibit STAT3 transcription activity (By similarity). Oxidation of lysine residues to allysine on STAT3 preferentially takes place on lysine residues that are acetylated (By similarity).</text>
</comment>
<comment type="PTM">
    <text evidence="2">Some lysine residues are oxidized to allysine by LOXL3, leading to disrupt STAT3 dimerization and inhibit STAT3 transcription activity. Oxidation of lysine residues to allysine on STAT3 preferentially takes place on lysine residues that are acetylated.</text>
</comment>
<comment type="miscellaneous">
    <text>Involved in the gp130-mediated signaling pathway.</text>
</comment>
<comment type="similarity">
    <text evidence="7">Belongs to the transcription factor STAT family.</text>
</comment>
<name>STAT3_RAT</name>
<evidence type="ECO:0000250" key="1"/>
<evidence type="ECO:0000250" key="2">
    <source>
        <dbReference type="UniProtKB" id="P40763"/>
    </source>
</evidence>
<evidence type="ECO:0000250" key="3">
    <source>
        <dbReference type="UniProtKB" id="P42227"/>
    </source>
</evidence>
<evidence type="ECO:0000255" key="4">
    <source>
        <dbReference type="PROSITE-ProRule" id="PRU00191"/>
    </source>
</evidence>
<evidence type="ECO:0000269" key="5">
    <source>
    </source>
</evidence>
<evidence type="ECO:0000269" key="6">
    <source>
    </source>
</evidence>
<evidence type="ECO:0000305" key="7"/>
<accession>P52631</accession>
<feature type="initiator methionine" description="Removed" evidence="2">
    <location>
        <position position="1"/>
    </location>
</feature>
<feature type="chain" id="PRO_0000182419" description="Signal transducer and activator of transcription 3">
    <location>
        <begin position="2"/>
        <end position="770"/>
    </location>
</feature>
<feature type="domain" description="SH2" evidence="4">
    <location>
        <begin position="580"/>
        <end position="670"/>
    </location>
</feature>
<feature type="short sequence motif" description="Essential for nuclear import" evidence="1">
    <location>
        <begin position="150"/>
        <end position="162"/>
    </location>
</feature>
<feature type="modified residue" description="N-acetylalanine" evidence="2">
    <location>
        <position position="2"/>
    </location>
</feature>
<feature type="modified residue" description="N6-acetyllysine" evidence="2">
    <location>
        <position position="49"/>
    </location>
</feature>
<feature type="modified residue" description="N6-acetyllysine" evidence="2">
    <location>
        <position position="87"/>
    </location>
</feature>
<feature type="modified residue" description="Allysine; alternate" evidence="2">
    <location>
        <position position="601"/>
    </location>
</feature>
<feature type="modified residue" description="N6-acetyllysine; alternate" evidence="2">
    <location>
        <position position="601"/>
    </location>
</feature>
<feature type="modified residue" description="Allysine; alternate" evidence="2">
    <location>
        <position position="615"/>
    </location>
</feature>
<feature type="modified residue" description="N6-acetyllysine; alternate" evidence="2">
    <location>
        <position position="615"/>
    </location>
</feature>
<feature type="modified residue" description="Allysine; alternate" evidence="2">
    <location>
        <position position="631"/>
    </location>
</feature>
<feature type="modified residue" description="N6-acetyllysine; alternate" evidence="2">
    <location>
        <position position="631"/>
    </location>
</feature>
<feature type="modified residue" description="Phosphotyrosine; by TYK2" evidence="2">
    <location>
        <position position="640"/>
    </location>
</feature>
<feature type="modified residue" description="Allysine; alternate" evidence="2">
    <location>
        <position position="685"/>
    </location>
</feature>
<feature type="modified residue" description="N6-acetyllysine; alternate" evidence="2">
    <location>
        <position position="685"/>
    </location>
</feature>
<feature type="modified residue" description="Phosphotyrosine; by FER and PTK6" evidence="2">
    <location>
        <position position="705"/>
    </location>
</feature>
<feature type="modified residue" description="N6-acetyllysine" evidence="2">
    <location>
        <position position="707"/>
    </location>
</feature>
<feature type="modified residue" description="Phosphothreonine" evidence="2">
    <location>
        <position position="714"/>
    </location>
</feature>
<feature type="modified residue" description="Phosphoserine; by DYRK2, NLK, NEK6, IRAK1, RPS6KA5, ZIPK/DAPK3 and PKC/PRKCE" evidence="2">
    <location>
        <position position="727"/>
    </location>
</feature>
<protein>
    <recommendedName>
        <fullName>Signal transducer and activator of transcription 3</fullName>
    </recommendedName>
</protein>